<dbReference type="EC" id="2.7.11.26"/>
<dbReference type="EMBL" id="HE600996">
    <property type="protein sequence ID" value="CAP27886.1"/>
    <property type="molecule type" value="Genomic_DNA"/>
</dbReference>
<dbReference type="SMR" id="A8X5H5"/>
<dbReference type="FunCoup" id="A8X5H5">
    <property type="interactions" value="1799"/>
</dbReference>
<dbReference type="STRING" id="6238.A8X5H5"/>
<dbReference type="EnsemblMetazoa" id="CBG07972.1">
    <property type="protein sequence ID" value="CBG07972.1"/>
    <property type="gene ID" value="WBGene00029853"/>
</dbReference>
<dbReference type="KEGG" id="cbr:CBG_07972"/>
<dbReference type="CTD" id="8588159"/>
<dbReference type="WormBase" id="CBG07972">
    <property type="protein sequence ID" value="CBP01995"/>
    <property type="gene ID" value="WBGene00029853"/>
    <property type="gene designation" value="Cbr-gsk-3"/>
</dbReference>
<dbReference type="eggNOG" id="KOG0658">
    <property type="taxonomic scope" value="Eukaryota"/>
</dbReference>
<dbReference type="HOGENOM" id="CLU_000288_181_20_1"/>
<dbReference type="InParanoid" id="A8X5H5"/>
<dbReference type="OMA" id="LKPHPWS"/>
<dbReference type="Proteomes" id="UP000008549">
    <property type="component" value="Unassembled WGS sequence"/>
</dbReference>
<dbReference type="GO" id="GO:0030424">
    <property type="term" value="C:axon"/>
    <property type="evidence" value="ECO:0000318"/>
    <property type="project" value="GO_Central"/>
</dbReference>
<dbReference type="GO" id="GO:0005737">
    <property type="term" value="C:cytoplasm"/>
    <property type="evidence" value="ECO:0000318"/>
    <property type="project" value="GO_Central"/>
</dbReference>
<dbReference type="GO" id="GO:0005829">
    <property type="term" value="C:cytosol"/>
    <property type="evidence" value="ECO:0000318"/>
    <property type="project" value="GO_Central"/>
</dbReference>
<dbReference type="GO" id="GO:0005634">
    <property type="term" value="C:nucleus"/>
    <property type="evidence" value="ECO:0000318"/>
    <property type="project" value="GO_Central"/>
</dbReference>
<dbReference type="GO" id="GO:0005524">
    <property type="term" value="F:ATP binding"/>
    <property type="evidence" value="ECO:0007669"/>
    <property type="project" value="UniProtKB-KW"/>
</dbReference>
<dbReference type="GO" id="GO:0004674">
    <property type="term" value="F:protein serine/threonine kinase activity"/>
    <property type="evidence" value="ECO:0000318"/>
    <property type="project" value="GO_Central"/>
</dbReference>
<dbReference type="GO" id="GO:0030154">
    <property type="term" value="P:cell differentiation"/>
    <property type="evidence" value="ECO:0000318"/>
    <property type="project" value="GO_Central"/>
</dbReference>
<dbReference type="GO" id="GO:0043652">
    <property type="term" value="P:engulfment of apoptotic cell"/>
    <property type="evidence" value="ECO:0007669"/>
    <property type="project" value="EnsemblMetazoa"/>
</dbReference>
<dbReference type="GO" id="GO:0000132">
    <property type="term" value="P:establishment of mitotic spindle orientation"/>
    <property type="evidence" value="ECO:0007669"/>
    <property type="project" value="EnsemblMetazoa"/>
</dbReference>
<dbReference type="GO" id="GO:0007281">
    <property type="term" value="P:germ cell development"/>
    <property type="evidence" value="ECO:0007669"/>
    <property type="project" value="EnsemblMetazoa"/>
</dbReference>
<dbReference type="GO" id="GO:0070986">
    <property type="term" value="P:left/right axis specification"/>
    <property type="evidence" value="ECO:0007669"/>
    <property type="project" value="EnsemblMetazoa"/>
</dbReference>
<dbReference type="GO" id="GO:0090090">
    <property type="term" value="P:negative regulation of canonical Wnt signaling pathway"/>
    <property type="evidence" value="ECO:0000250"/>
    <property type="project" value="UniProtKB"/>
</dbReference>
<dbReference type="GO" id="GO:1903356">
    <property type="term" value="P:positive regulation of distal tip cell migration"/>
    <property type="evidence" value="ECO:0007669"/>
    <property type="project" value="EnsemblMetazoa"/>
</dbReference>
<dbReference type="GO" id="GO:1901076">
    <property type="term" value="P:positive regulation of engulfment of apoptotic cell"/>
    <property type="evidence" value="ECO:0007669"/>
    <property type="project" value="EnsemblMetazoa"/>
</dbReference>
<dbReference type="GO" id="GO:0032436">
    <property type="term" value="P:positive regulation of proteasomal ubiquitin-dependent protein catabolic process"/>
    <property type="evidence" value="ECO:0000318"/>
    <property type="project" value="GO_Central"/>
</dbReference>
<dbReference type="GO" id="GO:0070507">
    <property type="term" value="P:regulation of microtubule cytoskeleton organization"/>
    <property type="evidence" value="ECO:0000318"/>
    <property type="project" value="GO_Central"/>
</dbReference>
<dbReference type="GO" id="GO:0007165">
    <property type="term" value="P:signal transduction"/>
    <property type="evidence" value="ECO:0000318"/>
    <property type="project" value="GO_Central"/>
</dbReference>
<dbReference type="GO" id="GO:0060069">
    <property type="term" value="P:Wnt signaling pathway, regulating spindle positioning"/>
    <property type="evidence" value="ECO:0007669"/>
    <property type="project" value="EnsemblMetazoa"/>
</dbReference>
<dbReference type="CDD" id="cd14137">
    <property type="entry name" value="STKc_GSK3"/>
    <property type="match status" value="1"/>
</dbReference>
<dbReference type="FunFam" id="1.10.510.10:FF:000055">
    <property type="entry name" value="Glycogen synthase kinase-3 beta"/>
    <property type="match status" value="1"/>
</dbReference>
<dbReference type="FunFam" id="3.30.200.20:FF:000009">
    <property type="entry name" value="Glycogen synthase kinase-3 beta"/>
    <property type="match status" value="1"/>
</dbReference>
<dbReference type="Gene3D" id="3.30.200.20">
    <property type="entry name" value="Phosphorylase Kinase, domain 1"/>
    <property type="match status" value="1"/>
</dbReference>
<dbReference type="Gene3D" id="1.10.510.10">
    <property type="entry name" value="Transferase(Phosphotransferase) domain 1"/>
    <property type="match status" value="1"/>
</dbReference>
<dbReference type="InterPro" id="IPR050591">
    <property type="entry name" value="GSK-3"/>
</dbReference>
<dbReference type="InterPro" id="IPR011009">
    <property type="entry name" value="Kinase-like_dom_sf"/>
</dbReference>
<dbReference type="InterPro" id="IPR000719">
    <property type="entry name" value="Prot_kinase_dom"/>
</dbReference>
<dbReference type="InterPro" id="IPR017441">
    <property type="entry name" value="Protein_kinase_ATP_BS"/>
</dbReference>
<dbReference type="InterPro" id="IPR008271">
    <property type="entry name" value="Ser/Thr_kinase_AS"/>
</dbReference>
<dbReference type="InterPro" id="IPR039192">
    <property type="entry name" value="STKc_GSK3"/>
</dbReference>
<dbReference type="PANTHER" id="PTHR24057">
    <property type="entry name" value="GLYCOGEN SYNTHASE KINASE-3 ALPHA"/>
    <property type="match status" value="1"/>
</dbReference>
<dbReference type="PANTHER" id="PTHR24057:SF0">
    <property type="entry name" value="PROTEIN KINASE SHAGGY-RELATED"/>
    <property type="match status" value="1"/>
</dbReference>
<dbReference type="Pfam" id="PF00069">
    <property type="entry name" value="Pkinase"/>
    <property type="match status" value="1"/>
</dbReference>
<dbReference type="SMART" id="SM00220">
    <property type="entry name" value="S_TKc"/>
    <property type="match status" value="1"/>
</dbReference>
<dbReference type="SUPFAM" id="SSF56112">
    <property type="entry name" value="Protein kinase-like (PK-like)"/>
    <property type="match status" value="1"/>
</dbReference>
<dbReference type="PROSITE" id="PS00107">
    <property type="entry name" value="PROTEIN_KINASE_ATP"/>
    <property type="match status" value="1"/>
</dbReference>
<dbReference type="PROSITE" id="PS50011">
    <property type="entry name" value="PROTEIN_KINASE_DOM"/>
    <property type="match status" value="1"/>
</dbReference>
<dbReference type="PROSITE" id="PS00108">
    <property type="entry name" value="PROTEIN_KINASE_ST"/>
    <property type="match status" value="1"/>
</dbReference>
<reference evidence="8" key="1">
    <citation type="journal article" date="2003" name="PLoS Biol.">
        <title>The genome sequence of Caenorhabditis briggsae: a platform for comparative genomics.</title>
        <authorList>
            <person name="Stein L.D."/>
            <person name="Bao Z."/>
            <person name="Blasiar D."/>
            <person name="Blumenthal T."/>
            <person name="Brent M.R."/>
            <person name="Chen N."/>
            <person name="Chinwalla A."/>
            <person name="Clarke L."/>
            <person name="Clee C."/>
            <person name="Coghlan A."/>
            <person name="Coulson A."/>
            <person name="D'Eustachio P."/>
            <person name="Fitch D.H.A."/>
            <person name="Fulton L.A."/>
            <person name="Fulton R.E."/>
            <person name="Griffiths-Jones S."/>
            <person name="Harris T.W."/>
            <person name="Hillier L.W."/>
            <person name="Kamath R."/>
            <person name="Kuwabara P.E."/>
            <person name="Mardis E.R."/>
            <person name="Marra M.A."/>
            <person name="Miner T.L."/>
            <person name="Minx P."/>
            <person name="Mullikin J.C."/>
            <person name="Plumb R.W."/>
            <person name="Rogers J."/>
            <person name="Schein J.E."/>
            <person name="Sohrmann M."/>
            <person name="Spieth J."/>
            <person name="Stajich J.E."/>
            <person name="Wei C."/>
            <person name="Willey D."/>
            <person name="Wilson R.K."/>
            <person name="Durbin R.M."/>
            <person name="Waterston R.H."/>
        </authorList>
    </citation>
    <scope>NUCLEOTIDE SEQUENCE [LARGE SCALE GENOMIC DNA]</scope>
    <source>
        <strain evidence="8">AF16</strain>
    </source>
</reference>
<gene>
    <name type="primary">gsk-3</name>
    <name type="ORF">CBG07972</name>
</gene>
<organism>
    <name type="scientific">Caenorhabditis briggsae</name>
    <dbReference type="NCBI Taxonomy" id="6238"/>
    <lineage>
        <taxon>Eukaryota</taxon>
        <taxon>Metazoa</taxon>
        <taxon>Ecdysozoa</taxon>
        <taxon>Nematoda</taxon>
        <taxon>Chromadorea</taxon>
        <taxon>Rhabditida</taxon>
        <taxon>Rhabditina</taxon>
        <taxon>Rhabditomorpha</taxon>
        <taxon>Rhabditoidea</taxon>
        <taxon>Rhabditidae</taxon>
        <taxon>Peloderinae</taxon>
        <taxon>Caenorhabditis</taxon>
    </lineage>
</organism>
<keyword id="KW-0067">ATP-binding</keyword>
<keyword id="KW-0217">Developmental protein</keyword>
<keyword id="KW-0418">Kinase</keyword>
<keyword id="KW-0547">Nucleotide-binding</keyword>
<keyword id="KW-1185">Reference proteome</keyword>
<keyword id="KW-0723">Serine/threonine-protein kinase</keyword>
<keyword id="KW-0346">Stress response</keyword>
<keyword id="KW-0808">Transferase</keyword>
<keyword id="KW-0879">Wnt signaling pathway</keyword>
<accession>A8X5H5</accession>
<comment type="function">
    <text evidence="2">Phosphorylates oma-1, a regulator of the oocyte-to-embryo transition, enabling its degradation. Phosphorylates skn-1, preventing it from accumulating in nuclei and thus inhibiting phase II gene expression in the oxidative stress defense. Involved in mesendoderm specification and mitotic spindle orientation in EMS blastomeres. Thought to be a branch point in these processes as proteins downstream are not required. Negatively regulates Wnt signaling in vulval precursor cells and acts as a Wnt-independent repressor of med-1 and med-2 in the C lineage inhibiting mesoderm development. Required for normal lifespan and LiCl-induced lifespan extension (By similarity).</text>
</comment>
<comment type="catalytic activity">
    <reaction evidence="1">
        <text>L-seryl-[tau protein] + ATP = O-phospho-L-seryl-[tau protein] + ADP + H(+)</text>
        <dbReference type="Rhea" id="RHEA:12801"/>
        <dbReference type="Rhea" id="RHEA-COMP:13701"/>
        <dbReference type="Rhea" id="RHEA-COMP:13702"/>
        <dbReference type="ChEBI" id="CHEBI:15378"/>
        <dbReference type="ChEBI" id="CHEBI:29999"/>
        <dbReference type="ChEBI" id="CHEBI:30616"/>
        <dbReference type="ChEBI" id="CHEBI:83421"/>
        <dbReference type="ChEBI" id="CHEBI:456216"/>
        <dbReference type="EC" id="2.7.11.26"/>
    </reaction>
</comment>
<comment type="catalytic activity">
    <reaction evidence="1">
        <text>L-threonyl-[tau protein] + ATP = O-phospho-L-threonyl-[tau protein] + ADP + H(+)</text>
        <dbReference type="Rhea" id="RHEA:53904"/>
        <dbReference type="Rhea" id="RHEA-COMP:13703"/>
        <dbReference type="Rhea" id="RHEA-COMP:13704"/>
        <dbReference type="ChEBI" id="CHEBI:15378"/>
        <dbReference type="ChEBI" id="CHEBI:30013"/>
        <dbReference type="ChEBI" id="CHEBI:30616"/>
        <dbReference type="ChEBI" id="CHEBI:61977"/>
        <dbReference type="ChEBI" id="CHEBI:456216"/>
        <dbReference type="EC" id="2.7.11.26"/>
    </reaction>
</comment>
<comment type="subunit">
    <text evidence="2 3">Monomer. Interacts with axl-1.</text>
</comment>
<comment type="similarity">
    <text evidence="4">Belongs to the protein kinase superfamily. CMGC Ser/Thr protein kinase family. GSK-3 subfamily.</text>
</comment>
<proteinExistence type="inferred from homology"/>
<evidence type="ECO:0000250" key="1">
    <source>
        <dbReference type="UniProtKB" id="P49841"/>
    </source>
</evidence>
<evidence type="ECO:0000250" key="2">
    <source>
        <dbReference type="UniProtKB" id="Q9U2Q9"/>
    </source>
</evidence>
<evidence type="ECO:0000250" key="3">
    <source>
        <dbReference type="UniProtKB" id="Q9WV60"/>
    </source>
</evidence>
<evidence type="ECO:0000255" key="4"/>
<evidence type="ECO:0000255" key="5">
    <source>
        <dbReference type="PROSITE-ProRule" id="PRU00159"/>
    </source>
</evidence>
<evidence type="ECO:0000255" key="6">
    <source>
        <dbReference type="PROSITE-ProRule" id="PRU10027"/>
    </source>
</evidence>
<evidence type="ECO:0000256" key="7">
    <source>
        <dbReference type="SAM" id="MobiDB-lite"/>
    </source>
</evidence>
<evidence type="ECO:0000312" key="8">
    <source>
        <dbReference type="EMBL" id="CAP27886.1"/>
    </source>
</evidence>
<name>GSK3_CAEBR</name>
<protein>
    <recommendedName>
        <fullName evidence="2">Glycogen synthase kinase-3</fullName>
        <ecNumber>2.7.11.26</ecNumber>
    </recommendedName>
</protein>
<feature type="chain" id="PRO_0000349135" description="Glycogen synthase kinase-3">
    <location>
        <begin position="1"/>
        <end position="359"/>
    </location>
</feature>
<feature type="domain" description="Protein kinase" evidence="5">
    <location>
        <begin position="36"/>
        <end position="320"/>
    </location>
</feature>
<feature type="region of interest" description="Disordered" evidence="7">
    <location>
        <begin position="330"/>
        <end position="359"/>
    </location>
</feature>
<feature type="active site" description="Proton acceptor" evidence="5 6">
    <location>
        <position position="161"/>
    </location>
</feature>
<feature type="binding site" evidence="5">
    <location>
        <begin position="42"/>
        <end position="50"/>
    </location>
    <ligand>
        <name>ATP</name>
        <dbReference type="ChEBI" id="CHEBI:30616"/>
    </ligand>
</feature>
<feature type="binding site" evidence="5">
    <location>
        <position position="65"/>
    </location>
    <ligand>
        <name>ATP</name>
        <dbReference type="ChEBI" id="CHEBI:30616"/>
    </ligand>
</feature>
<sequence length="359" mass="40551">MNKQLLSCSLKSGKQVTMVVASVATDGVDQQVEISYYDQKVIGNGSFGVVFLAKLSTTNEMVAIKKVLQDKRFKNRELQIMRKLNHPNIVKLKYFFYSSGDKKDELYLNLILEYVPETVYRVARHYSKQRQSIPMIYVKLYMYQLLRSLAYIHSIGICHRDIKPQNLLIDPETGILKLCDFGSAKYLVRNEPNVSYICSRYYRAPELIFGATNYTNSIDVWSAGTVIAELLLGQPIFPGDSGVDQLVEIIKVLGTPTREQIQSMNPNYKEFKFPQIKAHPWNKVFRVHTPAEAIDLISKIIEYTPTSRPTPQAACQHAFFDELRSPDARLPSGRALPQLEMDGPNEVSATGGDMAGPSA</sequence>